<name>FLGI_SULDN</name>
<accession>Q30T40</accession>
<protein>
    <recommendedName>
        <fullName evidence="1">Flagellar P-ring protein</fullName>
    </recommendedName>
    <alternativeName>
        <fullName evidence="1">Basal body P-ring protein</fullName>
    </alternativeName>
</protein>
<proteinExistence type="inferred from homology"/>
<gene>
    <name evidence="1" type="primary">flgI</name>
    <name type="ordered locus">Suden_0562</name>
</gene>
<keyword id="KW-0975">Bacterial flagellum</keyword>
<keyword id="KW-0574">Periplasm</keyword>
<keyword id="KW-1185">Reference proteome</keyword>
<keyword id="KW-0732">Signal</keyword>
<reference key="1">
    <citation type="journal article" date="2008" name="Appl. Environ. Microbiol.">
        <title>Genome of the epsilonproteobacterial chemolithoautotroph Sulfurimonas denitrificans.</title>
        <authorList>
            <person name="Sievert S.M."/>
            <person name="Scott K.M."/>
            <person name="Klotz M.G."/>
            <person name="Chain P.S.G."/>
            <person name="Hauser L.J."/>
            <person name="Hemp J."/>
            <person name="Huegler M."/>
            <person name="Land M."/>
            <person name="Lapidus A."/>
            <person name="Larimer F.W."/>
            <person name="Lucas S."/>
            <person name="Malfatti S.A."/>
            <person name="Meyer F."/>
            <person name="Paulsen I.T."/>
            <person name="Ren Q."/>
            <person name="Simon J."/>
            <person name="Bailey K."/>
            <person name="Diaz E."/>
            <person name="Fitzpatrick K.A."/>
            <person name="Glover B."/>
            <person name="Gwatney N."/>
            <person name="Korajkic A."/>
            <person name="Long A."/>
            <person name="Mobberley J.M."/>
            <person name="Pantry S.N."/>
            <person name="Pazder G."/>
            <person name="Peterson S."/>
            <person name="Quintanilla J.D."/>
            <person name="Sprinkle R."/>
            <person name="Stephens J."/>
            <person name="Thomas P."/>
            <person name="Vaughn R."/>
            <person name="Weber M.J."/>
            <person name="Wooten L.L."/>
        </authorList>
    </citation>
    <scope>NUCLEOTIDE SEQUENCE [LARGE SCALE GENOMIC DNA]</scope>
    <source>
        <strain>ATCC 33889 / DSM 1251</strain>
    </source>
</reference>
<comment type="function">
    <text evidence="1">Assembles around the rod to form the L-ring and probably protects the motor/basal body from shearing forces during rotation.</text>
</comment>
<comment type="subunit">
    <text evidence="1">The basal body constitutes a major portion of the flagellar organelle and consists of four rings (L,P,S, and M) mounted on a central rod.</text>
</comment>
<comment type="subcellular location">
    <subcellularLocation>
        <location evidence="1">Periplasm</location>
    </subcellularLocation>
    <subcellularLocation>
        <location evidence="1">Bacterial flagellum basal body</location>
    </subcellularLocation>
</comment>
<comment type="similarity">
    <text evidence="1">Belongs to the FlgI family.</text>
</comment>
<dbReference type="EMBL" id="CP000153">
    <property type="protein sequence ID" value="ABB43841.1"/>
    <property type="molecule type" value="Genomic_DNA"/>
</dbReference>
<dbReference type="RefSeq" id="WP_011372195.1">
    <property type="nucleotide sequence ID" value="NC_007575.1"/>
</dbReference>
<dbReference type="SMR" id="Q30T40"/>
<dbReference type="STRING" id="326298.Suden_0562"/>
<dbReference type="KEGG" id="tdn:Suden_0562"/>
<dbReference type="eggNOG" id="COG1706">
    <property type="taxonomic scope" value="Bacteria"/>
</dbReference>
<dbReference type="HOGENOM" id="CLU_045235_1_0_7"/>
<dbReference type="OrthoDB" id="9786431at2"/>
<dbReference type="Proteomes" id="UP000002714">
    <property type="component" value="Chromosome"/>
</dbReference>
<dbReference type="GO" id="GO:0009428">
    <property type="term" value="C:bacterial-type flagellum basal body, distal rod, P ring"/>
    <property type="evidence" value="ECO:0007669"/>
    <property type="project" value="InterPro"/>
</dbReference>
<dbReference type="GO" id="GO:0030288">
    <property type="term" value="C:outer membrane-bounded periplasmic space"/>
    <property type="evidence" value="ECO:0007669"/>
    <property type="project" value="InterPro"/>
</dbReference>
<dbReference type="GO" id="GO:0005198">
    <property type="term" value="F:structural molecule activity"/>
    <property type="evidence" value="ECO:0007669"/>
    <property type="project" value="InterPro"/>
</dbReference>
<dbReference type="GO" id="GO:0071973">
    <property type="term" value="P:bacterial-type flagellum-dependent cell motility"/>
    <property type="evidence" value="ECO:0007669"/>
    <property type="project" value="InterPro"/>
</dbReference>
<dbReference type="HAMAP" id="MF_00416">
    <property type="entry name" value="FlgI"/>
    <property type="match status" value="1"/>
</dbReference>
<dbReference type="InterPro" id="IPR001782">
    <property type="entry name" value="Flag_FlgI"/>
</dbReference>
<dbReference type="NCBIfam" id="NF003676">
    <property type="entry name" value="PRK05303.1"/>
    <property type="match status" value="1"/>
</dbReference>
<dbReference type="PANTHER" id="PTHR30381">
    <property type="entry name" value="FLAGELLAR P-RING PERIPLASMIC PROTEIN FLGI"/>
    <property type="match status" value="1"/>
</dbReference>
<dbReference type="PANTHER" id="PTHR30381:SF0">
    <property type="entry name" value="FLAGELLAR P-RING PROTEIN"/>
    <property type="match status" value="1"/>
</dbReference>
<dbReference type="Pfam" id="PF02119">
    <property type="entry name" value="FlgI"/>
    <property type="match status" value="1"/>
</dbReference>
<dbReference type="PRINTS" id="PR01010">
    <property type="entry name" value="FLGPRINGFLGI"/>
</dbReference>
<feature type="signal peptide" evidence="1">
    <location>
        <begin position="1"/>
        <end position="20"/>
    </location>
</feature>
<feature type="chain" id="PRO_0000236325" description="Flagellar P-ring protein">
    <location>
        <begin position="21"/>
        <end position="351"/>
    </location>
</feature>
<sequence length="351" mass="37636">MKKILFLFTASLLLHVTLQAAKISDVASIVGVRDNHLIGYSLVVGLQKTGDGTTSKFTLQSIANMLKAMNIDMKPIDIKSKNVAAVVVTAELAPFARQGDKINITVSSIGDAKSLEGGTLLMTPLKGVDGKIYALAQGAVSIGGRNGKGAGDSHPTAGLIYDGGLVEREIAIDLYNQDYVTLSLKDANFQNSVSIQKTLNGYYSTEVAVAMDSRTVKLKKPSNKTMIEFLAEVQEINMDYNVQDRIVINERTGTIISGVGIHIKPIIMTHGDITIKITEQENPDKPAGSMVVDENMVIGLNENELYTKEGTTTVANLVRSLQKLGATPKDIISILEAMKSAGSISAELKLI</sequence>
<organism>
    <name type="scientific">Sulfurimonas denitrificans (strain ATCC 33889 / DSM 1251)</name>
    <name type="common">Thiomicrospira denitrificans (strain ATCC 33889 / DSM 1251)</name>
    <dbReference type="NCBI Taxonomy" id="326298"/>
    <lineage>
        <taxon>Bacteria</taxon>
        <taxon>Pseudomonadati</taxon>
        <taxon>Campylobacterota</taxon>
        <taxon>Epsilonproteobacteria</taxon>
        <taxon>Campylobacterales</taxon>
        <taxon>Sulfurimonadaceae</taxon>
        <taxon>Sulfurimonas</taxon>
    </lineage>
</organism>
<evidence type="ECO:0000255" key="1">
    <source>
        <dbReference type="HAMAP-Rule" id="MF_00416"/>
    </source>
</evidence>